<proteinExistence type="evidence at protein level"/>
<comment type="function">
    <text evidence="2 3 4">RNA N6-methyltransferase that methylates adenosine residues at the N(6) position of a subset of RNAs and is involved in S-adenosyl-L-methionine homeostasis by regulating splicing of S-adenosylmethionine synthase transcripts (sams-3, sams-4 and sams-5) (PubMed:33930289). Able to N6-methylate a subset of mRNAs containing the 5'UACAGAAAC-3' nonamer sequence (PubMed:33930289). Plays a key role in S-adenosyl-L-methionine homeostasis: under rich-diet conditions, catalyzes N6-methylation of S-adenosylmethionine synthase mRNAs (sams-3, sams-4 and sams-5), directly inhibiting splicing and protein production of S-adenosylmethionine synthase (PubMed:33930289). In addition to mRNAs, also able to mediate N6-methylation of U6 small nuclear RNA (U6 snRNA) (PubMed:33930289). Required for gamete production, inhibiting germ cell proliferative fate and ensuring germ cell meiotic development (PubMed:19596901, PubMed:19752194). Also promotes progression of the mitotic cell cycle in those germ cells that continue to proliferate (PubMed:19596901, PubMed:19752194). Plays a role in the development of the vulva, somatic gonad and embryo (PubMed:19596901).</text>
</comment>
<comment type="catalytic activity">
    <reaction evidence="4">
        <text>an adenosine in mRNA + S-adenosyl-L-methionine = an N(6)-methyladenosine in mRNA + S-adenosyl-L-homocysteine + H(+)</text>
        <dbReference type="Rhea" id="RHEA:55584"/>
        <dbReference type="Rhea" id="RHEA-COMP:12414"/>
        <dbReference type="Rhea" id="RHEA-COMP:12417"/>
        <dbReference type="ChEBI" id="CHEBI:15378"/>
        <dbReference type="ChEBI" id="CHEBI:57856"/>
        <dbReference type="ChEBI" id="CHEBI:59789"/>
        <dbReference type="ChEBI" id="CHEBI:74411"/>
        <dbReference type="ChEBI" id="CHEBI:74449"/>
        <dbReference type="EC" id="2.1.1.348"/>
    </reaction>
    <physiologicalReaction direction="left-to-right" evidence="4">
        <dbReference type="Rhea" id="RHEA:55585"/>
    </physiologicalReaction>
</comment>
<comment type="catalytic activity">
    <reaction evidence="4">
        <text>adenosine in U6 snRNA + S-adenosyl-L-methionine = N(6)-methyladenosine in U6 snRNA + S-adenosyl-L-homocysteine + H(+)</text>
        <dbReference type="Rhea" id="RHEA:52808"/>
        <dbReference type="Rhea" id="RHEA-COMP:13573"/>
        <dbReference type="Rhea" id="RHEA-COMP:13574"/>
        <dbReference type="ChEBI" id="CHEBI:15378"/>
        <dbReference type="ChEBI" id="CHEBI:57856"/>
        <dbReference type="ChEBI" id="CHEBI:59789"/>
        <dbReference type="ChEBI" id="CHEBI:74411"/>
        <dbReference type="ChEBI" id="CHEBI:74449"/>
        <dbReference type="EC" id="2.1.1.346"/>
    </reaction>
    <physiologicalReaction direction="left-to-right" evidence="4">
        <dbReference type="Rhea" id="RHEA:52809"/>
    </physiologicalReaction>
</comment>
<comment type="subunit">
    <text evidence="3">Self-associates (PubMed:19752194). Interacts with dlc-1; the interaction is direct, and is required for nuclear localization of mett-10 (PubMed:19752194).</text>
</comment>
<comment type="subcellular location">
    <subcellularLocation>
        <location evidence="2 3">Nucleus</location>
    </subcellularLocation>
    <text evidence="2 3">Accumulates in nuclei as cells enter meiosis (PubMed:19596901, PubMed:19752194). During meiotic prophase, expression is predominantly nuclear, but does not co-localize with DNA (PubMed:19596901). Recruited to the nucleus by dlc-1, a component of the dynein complex (PubMed:19752194).</text>
</comment>
<comment type="alternative products">
    <event type="alternative splicing"/>
    <isoform>
        <id>Q09357-1</id>
        <name evidence="7">a</name>
        <sequence type="displayed"/>
    </isoform>
    <isoform>
        <id>Q09357-2</id>
        <name evidence="8">b</name>
        <sequence type="described" ref="VSP_007120"/>
    </isoform>
</comment>
<comment type="tissue specificity">
    <text evidence="2">Expressed in the intestine, vulva, and cells of the somatic gonad including distal tip cells, gonadal sheath cells and spermatheca.</text>
</comment>
<comment type="similarity">
    <text evidence="6">Belongs to the methyltransferase superfamily. METTL16/RlmF family.</text>
</comment>
<organism>
    <name type="scientific">Caenorhabditis elegans</name>
    <dbReference type="NCBI Taxonomy" id="6239"/>
    <lineage>
        <taxon>Eukaryota</taxon>
        <taxon>Metazoa</taxon>
        <taxon>Ecdysozoa</taxon>
        <taxon>Nematoda</taxon>
        <taxon>Chromadorea</taxon>
        <taxon>Rhabditida</taxon>
        <taxon>Rhabditina</taxon>
        <taxon>Rhabditomorpha</taxon>
        <taxon>Rhabditoidea</taxon>
        <taxon>Rhabditidae</taxon>
        <taxon>Peloderinae</taxon>
        <taxon>Caenorhabditis</taxon>
    </lineage>
</organism>
<protein>
    <recommendedName>
        <fullName>U6 small nuclear RNA (adenine-(43)-N(6))-methyltransferase</fullName>
        <ecNumber evidence="4">2.1.1.346</ecNumber>
    </recommendedName>
    <alternativeName>
        <fullName evidence="6">N(6)-adenosine-methyltransferase mett-10</fullName>
        <ecNumber evidence="4">2.1.1.348</ecNumber>
    </alternativeName>
</protein>
<feature type="chain" id="PRO_0000218021" description="U6 small nuclear RNA (adenine-(43)-N(6))-methyltransferase">
    <location>
        <begin position="1"/>
        <end position="479"/>
    </location>
</feature>
<feature type="region of interest" description="Involved in dlc-1 binding" evidence="3">
    <location>
        <begin position="420"/>
        <end position="424"/>
    </location>
</feature>
<feature type="binding site" evidence="1">
    <location>
        <position position="82"/>
    </location>
    <ligand>
        <name>S-adenosyl-L-methionine</name>
        <dbReference type="ChEBI" id="CHEBI:59789"/>
    </ligand>
</feature>
<feature type="binding site" evidence="1">
    <location>
        <position position="108"/>
    </location>
    <ligand>
        <name>S-adenosyl-L-methionine</name>
        <dbReference type="ChEBI" id="CHEBI:59789"/>
    </ligand>
</feature>
<feature type="binding site" evidence="1">
    <location>
        <position position="131"/>
    </location>
    <ligand>
        <name>S-adenosyl-L-methionine</name>
        <dbReference type="ChEBI" id="CHEBI:59789"/>
    </ligand>
</feature>
<feature type="binding site" evidence="1">
    <location>
        <position position="164"/>
    </location>
    <ligand>
        <name>S-adenosyl-L-methionine</name>
        <dbReference type="ChEBI" id="CHEBI:59789"/>
    </ligand>
</feature>
<feature type="binding site" evidence="1">
    <location>
        <position position="184"/>
    </location>
    <ligand>
        <name>S-adenosyl-L-methionine</name>
        <dbReference type="ChEBI" id="CHEBI:59789"/>
    </ligand>
</feature>
<feature type="splice variant" id="VSP_007120" description="In isoform b." evidence="6">
    <location>
        <begin position="105"/>
        <end position="119"/>
    </location>
</feature>
<feature type="mutagenesis site" description="In ok2204; at 25 degrees Celsius animals are either sterile or maternal-effect lethal, display a protruding vulva phenotype, and germ cells have abnormalities in meiotic development and mitotic progression; when associated with E-292. Enhanced nuclear proliferation defects in germ cells in a weak loss of function dhc-1 (js319) mutant background; when associated with E-292." evidence="2 3">
    <location>
        <begin position="1"/>
        <end position="260"/>
    </location>
</feature>
<feature type="mutagenesis site" description="In oj32; at 25 degrees Celsius animals are either sterile or maternal-effect lethal and display a protruding vulva phenotype. Enhanced nuclear proliferation defects in germ cells in a weak loss of function dhc-1 (js319) mutant background." evidence="2 3">
    <original>G</original>
    <variation>R</variation>
    <location>
        <position position="110"/>
    </location>
</feature>
<feature type="mutagenesis site" description="In tm2697; at 25 degrees Celsius animals are either sterile or maternal-effect lethal and display a protruding vulva phenotype. Enhanced nuclear proliferation defects in germ cells in a weak loss of function dhc-1 (js319) mutant background." evidence="2 3">
    <location>
        <begin position="240"/>
        <end position="392"/>
    </location>
</feature>
<feature type="mutagenesis site" description="In g38; at 25 degrees Celsius animals are either sterile or maternal-effect lethal and display a protruding vulva phenotype. Enhanced nuclear proliferation defects in germ cells in a weak loss of function dhc-1 (js319) mutant background." evidence="2 3">
    <original>G</original>
    <variation>D</variation>
    <location>
        <position position="263"/>
    </location>
</feature>
<feature type="mutagenesis site" description="In oz36; at 25 degrees Celsius animals are either sterile or maternal-effect lethal, display a protruding vulva phenotype, a distended intestinal lumen, tumor formation, and germ cells have abnormalities in meiotic development. Enhanced tumor formation in weak loss of function dhc-1 (or195) or dhc-1 (js319) mutant backgrounds. Enhanced nuclear proliferation defects in germ cells in a weak loss of function dhc-1 (js319) mutant background." evidence="2 3">
    <location>
        <begin position="276"/>
        <end position="479"/>
    </location>
</feature>
<feature type="mutagenesis site" description="In ok2204; at 25 degrees Celsius animals are either sterile or maternal-effect lethal, display a protruding vulva phenotype, and germ cells have abnormalities in meiotic development and mitotic progression; when associated with 1-M--T-260 DEL. Enhanced nuclear proliferation defects in germ cells in a weak loss of function dhc-1 (js319) mutant background; when associated with 1-M--T-260 DEL." evidence="2 3">
    <original>G</original>
    <variation>E</variation>
    <location>
        <position position="292"/>
    </location>
</feature>
<feature type="mutagenesis site" description="Does not block nuclear entry. Blocks nuclear entry, and results in cytoplasmic localization of the mutant mett-10 protein; when associated with A-420; A-421; A-423 and A-424." evidence="3">
    <location>
        <begin position="361"/>
        <end position="367"/>
    </location>
</feature>
<feature type="mutagenesis site" description="Abolishes binding to dlc-1. Reduces nuclear accumulation of mett-10; when associated with A-421; A-423 and A-424. Blocks nuclear entry, and results in cytoplasmic localization of the mutant mett-10 protein; when associated with 361-A--A-367 DEL; A-421; A-423 and A-424." evidence="3">
    <original>D</original>
    <variation>A</variation>
    <location>
        <position position="420"/>
    </location>
</feature>
<feature type="mutagenesis site" description="Reduces binding to dlc-1. Abolishes binding to dlc-1, and reduces nuclear accumulation of mett-10; when associated with A-420; A-423 and A-424. Blocks nuclear entry, and results in cytoplasmic localization of the mutant mett-10 protein; when associated with 361-A--A-367 DEL; A-420; A-423 and A-424." evidence="3">
    <original>N</original>
    <variation>A</variation>
    <location>
        <position position="421"/>
    </location>
</feature>
<feature type="mutagenesis site" description="Reduces binding to dlc-1. Abolishes binding to dlc-1, and reduces nuclear accumulation of mett-10; when associated with A-420; A-421 and A-424. Blocks nuclear entry, and results in cytoplasmic localization of the mutant mett-10 protein; when associated with 361-A--A-367 DEL; A-420; A-421 and A-424." evidence="3">
    <original>S</original>
    <variation>A</variation>
    <location>
        <position position="423"/>
    </location>
</feature>
<feature type="mutagenesis site" description="Reduces binding to dlc-1. Abolishes binding to dlc-1, and reduces nuclear accumulation of mett-10; when associated with A-420; A-421 and A-423. Blocks nuclear entry, and results in cytoplasmic localization of the mutant mett-10 protein; when associated with 361-A--A-367 DEL; A-420; A-421 and A-423." evidence="3">
    <original>Q</original>
    <variation>A</variation>
    <location>
        <position position="424"/>
    </location>
</feature>
<feature type="mutagenesis site" description="Does not affect dlc-1 binding." evidence="3">
    <original>Y</original>
    <variation>A</variation>
    <location>
        <position position="426"/>
    </location>
</feature>
<feature type="mutagenesis site" description="Does not affect dlc-1 binding." evidence="3">
    <original>F</original>
    <variation>A</variation>
    <location>
        <position position="427"/>
    </location>
</feature>
<feature type="helix" evidence="9">
    <location>
        <begin position="20"/>
        <end position="26"/>
    </location>
</feature>
<feature type="helix" evidence="9">
    <location>
        <begin position="28"/>
        <end position="31"/>
    </location>
</feature>
<feature type="helix" evidence="9">
    <location>
        <begin position="49"/>
        <end position="64"/>
    </location>
</feature>
<feature type="strand" evidence="9">
    <location>
        <begin position="72"/>
        <end position="74"/>
    </location>
</feature>
<feature type="helix" evidence="9">
    <location>
        <begin position="79"/>
        <end position="95"/>
    </location>
</feature>
<feature type="strand" evidence="9">
    <location>
        <begin position="103"/>
        <end position="108"/>
    </location>
</feature>
<feature type="turn" evidence="9">
    <location>
        <begin position="110"/>
        <end position="113"/>
    </location>
</feature>
<feature type="helix" evidence="9">
    <location>
        <begin position="114"/>
        <end position="122"/>
    </location>
</feature>
<feature type="strand" evidence="9">
    <location>
        <begin position="126"/>
        <end position="132"/>
    </location>
</feature>
<feature type="helix" evidence="9">
    <location>
        <begin position="134"/>
        <end position="147"/>
    </location>
</feature>
<feature type="turn" evidence="9">
    <location>
        <begin position="150"/>
        <end position="152"/>
    </location>
</feature>
<feature type="strand" evidence="9">
    <location>
        <begin position="153"/>
        <end position="157"/>
    </location>
</feature>
<feature type="helix" evidence="9">
    <location>
        <begin position="167"/>
        <end position="170"/>
    </location>
</feature>
<feature type="strand" evidence="9">
    <location>
        <begin position="180"/>
        <end position="183"/>
    </location>
</feature>
<feature type="helix" evidence="9">
    <location>
        <begin position="237"/>
        <end position="249"/>
    </location>
</feature>
<feature type="turn" evidence="9">
    <location>
        <begin position="252"/>
        <end position="254"/>
    </location>
</feature>
<feature type="strand" evidence="9">
    <location>
        <begin position="255"/>
        <end position="262"/>
    </location>
</feature>
<feature type="helix" evidence="9">
    <location>
        <begin position="265"/>
        <end position="267"/>
    </location>
</feature>
<feature type="helix" evidence="9">
    <location>
        <begin position="268"/>
        <end position="276"/>
    </location>
</feature>
<feature type="helix" evidence="9">
    <location>
        <begin position="277"/>
        <end position="281"/>
    </location>
</feature>
<feature type="strand" evidence="9">
    <location>
        <begin position="282"/>
        <end position="288"/>
    </location>
</feature>
<feature type="strand" evidence="9">
    <location>
        <begin position="290"/>
        <end position="293"/>
    </location>
</feature>
<feature type="strand" evidence="9">
    <location>
        <begin position="297"/>
        <end position="302"/>
    </location>
</feature>
<sequence>MSQNNEMHPRNPYRNKPPDFKALAVEYPEFRKFCQYVSNGKVTFDFKKDAAVRCLTQTLLKKDFNLDVEIPPGHLVPRVPQKLNYCLLIDDLLKANKLTKNVIGIDIGTGTSCIHALIGARQFNWKFIATDGDEKSVRVAHENVAKNGLSSSICVVHVNPDVKTVLMDVVNTIPDTDYAFCMCNPPFFEKGNGDDKFCEDISSSTETYSNRVASEFRTAPHSATFASSAELFVDGGEVAFVNRIIDDSVLLRDRIKIYTTMIGRKSSLKPLQNRLQRFGDDVKIMISVLNQGKTKRWMLAWTFSKSVSLTTIDRPISFQCPKPGLTRLMQEISILNGRLRQEDTLAIVAEFKCVTWTNQRARKRAKAILSESSIKKAKWNFSNVACQVAFGAGDGKDSYTDAGNFVSSESIPTNNLNAWDNASQAYFPLPNGEVPGPIIRIRIQVFSEDSYDSISFELISGSKQHLHQLVQYLKNLICR</sequence>
<evidence type="ECO:0000250" key="1">
    <source>
        <dbReference type="UniProtKB" id="Q86W50"/>
    </source>
</evidence>
<evidence type="ECO:0000269" key="2">
    <source>
    </source>
</evidence>
<evidence type="ECO:0000269" key="3">
    <source>
    </source>
</evidence>
<evidence type="ECO:0000269" key="4">
    <source>
    </source>
</evidence>
<evidence type="ECO:0000303" key="5">
    <source>
    </source>
</evidence>
<evidence type="ECO:0000305" key="6"/>
<evidence type="ECO:0000312" key="7">
    <source>
        <dbReference type="WormBase" id="ZK1128.2a"/>
    </source>
</evidence>
<evidence type="ECO:0000312" key="8">
    <source>
        <dbReference type="WormBase" id="ZK1128.2b"/>
    </source>
</evidence>
<evidence type="ECO:0007829" key="9">
    <source>
        <dbReference type="PDB" id="8GU3"/>
    </source>
</evidence>
<keyword id="KW-0002">3D-structure</keyword>
<keyword id="KW-0025">Alternative splicing</keyword>
<keyword id="KW-0131">Cell cycle</keyword>
<keyword id="KW-0132">Cell division</keyword>
<keyword id="KW-0469">Meiosis</keyword>
<keyword id="KW-0489">Methyltransferase</keyword>
<keyword id="KW-0498">Mitosis</keyword>
<keyword id="KW-0539">Nucleus</keyword>
<keyword id="KW-1185">Reference proteome</keyword>
<keyword id="KW-0949">S-adenosyl-L-methionine</keyword>
<keyword id="KW-0808">Transferase</keyword>
<accession>Q09357</accession>
<accession>Q8I4B2</accession>
<dbReference type="EC" id="2.1.1.346" evidence="4"/>
<dbReference type="EC" id="2.1.1.348" evidence="4"/>
<dbReference type="EMBL" id="Z47357">
    <property type="protein sequence ID" value="CAA87421.2"/>
    <property type="molecule type" value="Genomic_DNA"/>
</dbReference>
<dbReference type="EMBL" id="Z47357">
    <property type="protein sequence ID" value="CAD54175.1"/>
    <property type="molecule type" value="Genomic_DNA"/>
</dbReference>
<dbReference type="PIR" id="T27693">
    <property type="entry name" value="T27693"/>
</dbReference>
<dbReference type="RefSeq" id="NP_001379069.1">
    <molecule id="Q09357-1"/>
    <property type="nucleotide sequence ID" value="NM_001392185.1"/>
</dbReference>
<dbReference type="RefSeq" id="NP_499247.2">
    <property type="nucleotide sequence ID" value="NM_066846.4"/>
</dbReference>
<dbReference type="RefSeq" id="NP_871660.1">
    <molecule id="Q09357-2"/>
    <property type="nucleotide sequence ID" value="NM_181931.10"/>
</dbReference>
<dbReference type="PDB" id="8GU3">
    <property type="method" value="X-ray"/>
    <property type="resolution" value="3.01 A"/>
    <property type="chains" value="A=1-314"/>
</dbReference>
<dbReference type="PDBsum" id="8GU3"/>
<dbReference type="SMR" id="Q09357"/>
<dbReference type="BioGRID" id="56058">
    <property type="interactions" value="7"/>
</dbReference>
<dbReference type="FunCoup" id="Q09357">
    <property type="interactions" value="3236"/>
</dbReference>
<dbReference type="IntAct" id="Q09357">
    <property type="interactions" value="1"/>
</dbReference>
<dbReference type="STRING" id="6239.ZK1128.2a.1"/>
<dbReference type="PaxDb" id="6239-ZK1128.2a"/>
<dbReference type="EnsemblMetazoa" id="ZK1128.2a.1">
    <molecule id="Q09357-1"/>
    <property type="protein sequence ID" value="ZK1128.2a.1"/>
    <property type="gene ID" value="WBGene00014228"/>
</dbReference>
<dbReference type="EnsemblMetazoa" id="ZK1128.2b.1">
    <molecule id="Q09357-2"/>
    <property type="protein sequence ID" value="ZK1128.2b.1"/>
    <property type="gene ID" value="WBGene00014228"/>
</dbReference>
<dbReference type="GeneID" id="191526"/>
<dbReference type="KEGG" id="cel:CELE_ZK1128.2"/>
<dbReference type="UCSC" id="ZK1128.2b">
    <molecule id="Q09357-1"/>
    <property type="organism name" value="c. elegans"/>
</dbReference>
<dbReference type="AGR" id="WB:WBGene00014228"/>
<dbReference type="CTD" id="191526"/>
<dbReference type="WormBase" id="ZK1128.2a">
    <molecule id="Q09357-1"/>
    <property type="protein sequence ID" value="CE31860"/>
    <property type="gene ID" value="WBGene00014228"/>
    <property type="gene designation" value="mett-10"/>
</dbReference>
<dbReference type="WormBase" id="ZK1128.2b">
    <molecule id="Q09357-2"/>
    <property type="protein sequence ID" value="CE31861"/>
    <property type="gene ID" value="WBGene00014228"/>
    <property type="gene designation" value="mett-10"/>
</dbReference>
<dbReference type="eggNOG" id="KOG2912">
    <property type="taxonomic scope" value="Eukaryota"/>
</dbReference>
<dbReference type="GeneTree" id="ENSGT00390000016694"/>
<dbReference type="HOGENOM" id="CLU_027534_0_0_1"/>
<dbReference type="InParanoid" id="Q09357"/>
<dbReference type="OMA" id="NEMHPRN"/>
<dbReference type="OrthoDB" id="514248at2759"/>
<dbReference type="PhylomeDB" id="Q09357"/>
<dbReference type="SignaLink" id="Q09357"/>
<dbReference type="PRO" id="PR:Q09357"/>
<dbReference type="Proteomes" id="UP000001940">
    <property type="component" value="Chromosome III"/>
</dbReference>
<dbReference type="Bgee" id="WBGene00014228">
    <property type="expression patterns" value="Expressed in germ line (C elegans) and 4 other cell types or tissues"/>
</dbReference>
<dbReference type="GO" id="GO:0005634">
    <property type="term" value="C:nucleus"/>
    <property type="evidence" value="ECO:0000314"/>
    <property type="project" value="WormBase"/>
</dbReference>
<dbReference type="GO" id="GO:0001734">
    <property type="term" value="F:mRNA m(6)A methyltransferase activity"/>
    <property type="evidence" value="ECO:0000314"/>
    <property type="project" value="UniProtKB"/>
</dbReference>
<dbReference type="GO" id="GO:0120048">
    <property type="term" value="F:U6 snRNA (adenine-(43)-N(6))-methyltransferase activity"/>
    <property type="evidence" value="ECO:0000314"/>
    <property type="project" value="UniProtKB"/>
</dbReference>
<dbReference type="GO" id="GO:0051301">
    <property type="term" value="P:cell division"/>
    <property type="evidence" value="ECO:0007669"/>
    <property type="project" value="UniProtKB-KW"/>
</dbReference>
<dbReference type="GO" id="GO:0007098">
    <property type="term" value="P:centrosome cycle"/>
    <property type="evidence" value="ECO:0000315"/>
    <property type="project" value="WormBase"/>
</dbReference>
<dbReference type="GO" id="GO:0009792">
    <property type="term" value="P:embryo development ending in birth or egg hatching"/>
    <property type="evidence" value="ECO:0000315"/>
    <property type="project" value="WormBase"/>
</dbReference>
<dbReference type="GO" id="GO:0051321">
    <property type="term" value="P:meiotic cell cycle"/>
    <property type="evidence" value="ECO:0007669"/>
    <property type="project" value="UniProtKB-KW"/>
</dbReference>
<dbReference type="GO" id="GO:0048025">
    <property type="term" value="P:negative regulation of mRNA splicing, via spliceosome"/>
    <property type="evidence" value="ECO:0000314"/>
    <property type="project" value="UniProtKB"/>
</dbReference>
<dbReference type="GO" id="GO:0010608">
    <property type="term" value="P:post-transcriptional regulation of gene expression"/>
    <property type="evidence" value="ECO:0000314"/>
    <property type="project" value="UniProtKB"/>
</dbReference>
<dbReference type="GO" id="GO:0070475">
    <property type="term" value="P:rRNA base methylation"/>
    <property type="evidence" value="ECO:0000318"/>
    <property type="project" value="GO_Central"/>
</dbReference>
<dbReference type="GO" id="GO:0040025">
    <property type="term" value="P:vulval development"/>
    <property type="evidence" value="ECO:0000315"/>
    <property type="project" value="WormBase"/>
</dbReference>
<dbReference type="FunFam" id="3.40.50.150:FF:000388">
    <property type="entry name" value="U6 small nuclear RNA (adenine-(43)-N(6))-methyltransferase"/>
    <property type="match status" value="1"/>
</dbReference>
<dbReference type="Gene3D" id="3.40.50.150">
    <property type="entry name" value="Vaccinia Virus protein VP39"/>
    <property type="match status" value="1"/>
</dbReference>
<dbReference type="InterPro" id="IPR017182">
    <property type="entry name" value="METTL16/PsiM"/>
</dbReference>
<dbReference type="InterPro" id="IPR010286">
    <property type="entry name" value="METTL16/RlmF"/>
</dbReference>
<dbReference type="InterPro" id="IPR029063">
    <property type="entry name" value="SAM-dependent_MTases_sf"/>
</dbReference>
<dbReference type="PANTHER" id="PTHR13393:SF0">
    <property type="entry name" value="RNA N6-ADENOSINE-METHYLTRANSFERASE METTL16"/>
    <property type="match status" value="1"/>
</dbReference>
<dbReference type="PANTHER" id="PTHR13393">
    <property type="entry name" value="SAM-DEPENDENT METHYLTRANSFERASE"/>
    <property type="match status" value="1"/>
</dbReference>
<dbReference type="Pfam" id="PF05971">
    <property type="entry name" value="Methyltransf_10"/>
    <property type="match status" value="1"/>
</dbReference>
<dbReference type="PIRSF" id="PIRSF037350">
    <property type="entry name" value="Mtase_ZK1128_prd"/>
    <property type="match status" value="1"/>
</dbReference>
<dbReference type="SUPFAM" id="SSF53335">
    <property type="entry name" value="S-adenosyl-L-methionine-dependent methyltransferases"/>
    <property type="match status" value="1"/>
</dbReference>
<reference key="1">
    <citation type="journal article" date="1998" name="Science">
        <title>Genome sequence of the nematode C. elegans: a platform for investigating biology.</title>
        <authorList>
            <consortium name="The C. elegans sequencing consortium"/>
        </authorList>
    </citation>
    <scope>NUCLEOTIDE SEQUENCE [LARGE SCALE GENOMIC DNA]</scope>
    <source>
        <strain>Bristol N2</strain>
    </source>
</reference>
<reference key="2">
    <citation type="journal article" date="2009" name="Genetics">
        <title>METT-10, a putative methyltransferase, inhibits germ cell proliferative fate in Caenorhabditis elegans.</title>
        <authorList>
            <person name="Dorsett M."/>
            <person name="Westlund B."/>
            <person name="Schedl T."/>
        </authorList>
    </citation>
    <scope>FUNCTION</scope>
    <scope>SUBCELLULAR LOCATION</scope>
    <scope>TISSUE SPECIFICITY</scope>
    <scope>MUTAGENESIS OF 1-MET--THR-260; GLY-110; 240-PHE--ALA-392; GLY-263; 276-GLN--ARG-479 AND GLY-292</scope>
</reference>
<reference key="3">
    <citation type="journal article" date="2009" name="Mol. Cell. Biol.">
        <title>A role for dynein in the inhibition of germ cell proliferative fate.</title>
        <authorList>
            <person name="Dorsett M."/>
            <person name="Schedl T."/>
        </authorList>
    </citation>
    <scope>FUNCTION</scope>
    <scope>INTERACTION WITH DLC-1</scope>
    <scope>SUBCELLULAR LOCATION</scope>
    <scope>MUTAGENESIS OF 1-MET--THR-260; GLY-110; 240-PHE--ALA-392; GLY-263; 276-GLN--ARG-479; GLY-292; 361-ALA--ALA-367; ASP-420; ASN-421; SER-423; GLN-424; TYR-426 AND PHE-427</scope>
</reference>
<reference key="4">
    <citation type="journal article" date="2021" name="Cell">
        <title>Splice site m6A methylation prevents binding of U2AF35 to inhibit RNA splicing.</title>
        <authorList>
            <person name="Mendel M."/>
            <person name="Delaney K."/>
            <person name="Pandey R.R."/>
            <person name="Chen K.M."/>
            <person name="Wenda J.M."/>
            <person name="Vaagboe C.B."/>
            <person name="Steiner F.A."/>
            <person name="Homolka D."/>
            <person name="Pillai R.S."/>
        </authorList>
    </citation>
    <scope>FUNCTION</scope>
    <scope>CATALYTIC ACTIVITY</scope>
</reference>
<gene>
    <name evidence="5 7" type="primary">mett-10</name>
    <name evidence="7" type="ORF">ZK1128.2</name>
</gene>
<name>MET16_CAEEL</name>